<gene>
    <name evidence="1" type="primary">def</name>
    <name type="ordered locus">SeAg_B3602</name>
</gene>
<keyword id="KW-0378">Hydrolase</keyword>
<keyword id="KW-0408">Iron</keyword>
<keyword id="KW-0479">Metal-binding</keyword>
<keyword id="KW-0648">Protein biosynthesis</keyword>
<organism>
    <name type="scientific">Salmonella agona (strain SL483)</name>
    <dbReference type="NCBI Taxonomy" id="454166"/>
    <lineage>
        <taxon>Bacteria</taxon>
        <taxon>Pseudomonadati</taxon>
        <taxon>Pseudomonadota</taxon>
        <taxon>Gammaproteobacteria</taxon>
        <taxon>Enterobacterales</taxon>
        <taxon>Enterobacteriaceae</taxon>
        <taxon>Salmonella</taxon>
    </lineage>
</organism>
<sequence>MSVLQVLHIPDERLRKVAKPVEEVNAEIQRIVDDMFETMYAEEGIGLAATQVDIHQRIIVIDVSENRDERLVLINPELLEKSGETGIEEGCLSIPEQRALVPRAEKVKIRALDRDGNPFELEADGLLAICIQHEMDHLVGKLFIDYLSPLKQQRIRQKVEKLDRLNARA</sequence>
<evidence type="ECO:0000255" key="1">
    <source>
        <dbReference type="HAMAP-Rule" id="MF_00163"/>
    </source>
</evidence>
<dbReference type="EC" id="3.5.1.88" evidence="1"/>
<dbReference type="EMBL" id="CP001138">
    <property type="protein sequence ID" value="ACH49764.1"/>
    <property type="molecule type" value="Genomic_DNA"/>
</dbReference>
<dbReference type="RefSeq" id="WP_000114987.1">
    <property type="nucleotide sequence ID" value="NC_011149.1"/>
</dbReference>
<dbReference type="SMR" id="B5F7R3"/>
<dbReference type="KEGG" id="sea:SeAg_B3602"/>
<dbReference type="HOGENOM" id="CLU_061901_2_1_6"/>
<dbReference type="Proteomes" id="UP000008819">
    <property type="component" value="Chromosome"/>
</dbReference>
<dbReference type="GO" id="GO:0046872">
    <property type="term" value="F:metal ion binding"/>
    <property type="evidence" value="ECO:0007669"/>
    <property type="project" value="UniProtKB-KW"/>
</dbReference>
<dbReference type="GO" id="GO:0042586">
    <property type="term" value="F:peptide deformylase activity"/>
    <property type="evidence" value="ECO:0007669"/>
    <property type="project" value="UniProtKB-UniRule"/>
</dbReference>
<dbReference type="GO" id="GO:0043686">
    <property type="term" value="P:co-translational protein modification"/>
    <property type="evidence" value="ECO:0007669"/>
    <property type="project" value="TreeGrafter"/>
</dbReference>
<dbReference type="GO" id="GO:0006412">
    <property type="term" value="P:translation"/>
    <property type="evidence" value="ECO:0007669"/>
    <property type="project" value="UniProtKB-UniRule"/>
</dbReference>
<dbReference type="CDD" id="cd00487">
    <property type="entry name" value="Pep_deformylase"/>
    <property type="match status" value="1"/>
</dbReference>
<dbReference type="FunFam" id="3.90.45.10:FF:000001">
    <property type="entry name" value="Peptide deformylase"/>
    <property type="match status" value="1"/>
</dbReference>
<dbReference type="Gene3D" id="3.90.45.10">
    <property type="entry name" value="Peptide deformylase"/>
    <property type="match status" value="1"/>
</dbReference>
<dbReference type="HAMAP" id="MF_00163">
    <property type="entry name" value="Pep_deformylase"/>
    <property type="match status" value="1"/>
</dbReference>
<dbReference type="InterPro" id="IPR023635">
    <property type="entry name" value="Peptide_deformylase"/>
</dbReference>
<dbReference type="InterPro" id="IPR036821">
    <property type="entry name" value="Peptide_deformylase_sf"/>
</dbReference>
<dbReference type="NCBIfam" id="TIGR00079">
    <property type="entry name" value="pept_deformyl"/>
    <property type="match status" value="1"/>
</dbReference>
<dbReference type="NCBIfam" id="NF001159">
    <property type="entry name" value="PRK00150.1-3"/>
    <property type="match status" value="1"/>
</dbReference>
<dbReference type="PANTHER" id="PTHR10458">
    <property type="entry name" value="PEPTIDE DEFORMYLASE"/>
    <property type="match status" value="1"/>
</dbReference>
<dbReference type="PANTHER" id="PTHR10458:SF21">
    <property type="entry name" value="PEPTIDE DEFORMYLASE"/>
    <property type="match status" value="1"/>
</dbReference>
<dbReference type="Pfam" id="PF01327">
    <property type="entry name" value="Pep_deformylase"/>
    <property type="match status" value="1"/>
</dbReference>
<dbReference type="PIRSF" id="PIRSF004749">
    <property type="entry name" value="Pep_def"/>
    <property type="match status" value="1"/>
</dbReference>
<dbReference type="PRINTS" id="PR01576">
    <property type="entry name" value="PDEFORMYLASE"/>
</dbReference>
<dbReference type="SUPFAM" id="SSF56420">
    <property type="entry name" value="Peptide deformylase"/>
    <property type="match status" value="1"/>
</dbReference>
<protein>
    <recommendedName>
        <fullName evidence="1">Peptide deformylase</fullName>
        <shortName evidence="1">PDF</shortName>
        <ecNumber evidence="1">3.5.1.88</ecNumber>
    </recommendedName>
    <alternativeName>
        <fullName evidence="1">Polypeptide deformylase</fullName>
    </alternativeName>
</protein>
<name>DEF_SALA4</name>
<comment type="function">
    <text evidence="1">Removes the formyl group from the N-terminal Met of newly synthesized proteins. Requires at least a dipeptide for an efficient rate of reaction. N-terminal L-methionine is a prerequisite for activity but the enzyme has broad specificity at other positions.</text>
</comment>
<comment type="catalytic activity">
    <reaction evidence="1">
        <text>N-terminal N-formyl-L-methionyl-[peptide] + H2O = N-terminal L-methionyl-[peptide] + formate</text>
        <dbReference type="Rhea" id="RHEA:24420"/>
        <dbReference type="Rhea" id="RHEA-COMP:10639"/>
        <dbReference type="Rhea" id="RHEA-COMP:10640"/>
        <dbReference type="ChEBI" id="CHEBI:15377"/>
        <dbReference type="ChEBI" id="CHEBI:15740"/>
        <dbReference type="ChEBI" id="CHEBI:49298"/>
        <dbReference type="ChEBI" id="CHEBI:64731"/>
        <dbReference type="EC" id="3.5.1.88"/>
    </reaction>
</comment>
<comment type="cofactor">
    <cofactor evidence="1">
        <name>Fe(2+)</name>
        <dbReference type="ChEBI" id="CHEBI:29033"/>
    </cofactor>
    <text evidence="1">Binds 1 Fe(2+) ion.</text>
</comment>
<comment type="similarity">
    <text evidence="1">Belongs to the polypeptide deformylase family.</text>
</comment>
<feature type="chain" id="PRO_1000097336" description="Peptide deformylase">
    <location>
        <begin position="1"/>
        <end position="169"/>
    </location>
</feature>
<feature type="active site" evidence="1">
    <location>
        <position position="134"/>
    </location>
</feature>
<feature type="binding site" evidence="1">
    <location>
        <position position="91"/>
    </location>
    <ligand>
        <name>Fe cation</name>
        <dbReference type="ChEBI" id="CHEBI:24875"/>
    </ligand>
</feature>
<feature type="binding site" evidence="1">
    <location>
        <position position="133"/>
    </location>
    <ligand>
        <name>Fe cation</name>
        <dbReference type="ChEBI" id="CHEBI:24875"/>
    </ligand>
</feature>
<feature type="binding site" evidence="1">
    <location>
        <position position="137"/>
    </location>
    <ligand>
        <name>Fe cation</name>
        <dbReference type="ChEBI" id="CHEBI:24875"/>
    </ligand>
</feature>
<accession>B5F7R3</accession>
<reference key="1">
    <citation type="journal article" date="2011" name="J. Bacteriol.">
        <title>Comparative genomics of 28 Salmonella enterica isolates: evidence for CRISPR-mediated adaptive sublineage evolution.</title>
        <authorList>
            <person name="Fricke W.F."/>
            <person name="Mammel M.K."/>
            <person name="McDermott P.F."/>
            <person name="Tartera C."/>
            <person name="White D.G."/>
            <person name="Leclerc J.E."/>
            <person name="Ravel J."/>
            <person name="Cebula T.A."/>
        </authorList>
    </citation>
    <scope>NUCLEOTIDE SEQUENCE [LARGE SCALE GENOMIC DNA]</scope>
    <source>
        <strain>SL483</strain>
    </source>
</reference>
<proteinExistence type="inferred from homology"/>